<name>TRPC_SYNS9</name>
<comment type="catalytic activity">
    <reaction evidence="1">
        <text>1-(2-carboxyphenylamino)-1-deoxy-D-ribulose 5-phosphate + H(+) = (1S,2R)-1-C-(indol-3-yl)glycerol 3-phosphate + CO2 + H2O</text>
        <dbReference type="Rhea" id="RHEA:23476"/>
        <dbReference type="ChEBI" id="CHEBI:15377"/>
        <dbReference type="ChEBI" id="CHEBI:15378"/>
        <dbReference type="ChEBI" id="CHEBI:16526"/>
        <dbReference type="ChEBI" id="CHEBI:58613"/>
        <dbReference type="ChEBI" id="CHEBI:58866"/>
        <dbReference type="EC" id="4.1.1.48"/>
    </reaction>
</comment>
<comment type="pathway">
    <text evidence="1">Amino-acid biosynthesis; L-tryptophan biosynthesis; L-tryptophan from chorismate: step 4/5.</text>
</comment>
<comment type="similarity">
    <text evidence="1">Belongs to the TrpC family.</text>
</comment>
<organism>
    <name type="scientific">Synechococcus sp. (strain CC9902)</name>
    <dbReference type="NCBI Taxonomy" id="316279"/>
    <lineage>
        <taxon>Bacteria</taxon>
        <taxon>Bacillati</taxon>
        <taxon>Cyanobacteriota</taxon>
        <taxon>Cyanophyceae</taxon>
        <taxon>Synechococcales</taxon>
        <taxon>Synechococcaceae</taxon>
        <taxon>Synechococcus</taxon>
    </lineage>
</organism>
<sequence>MEIRRRSPSPKIRVSYLEYGVPHDDEKPRNILEKIVWEKDREVDLARQKVPLDQLKKKISLLPPTKDFVAALKRAQIKPAVIAEVKKASPSKGVIRDDFDPVAIAKAYAAGGASCLSVLTDKQFFQGGFDVLVQVRETVDLPLLCKEFVLSPYQLFQARAAGADAVLLIAAILTDQDLRYLNKVAQSLGLDVLVEVHDAKELERVLAIGGFSLIGINNRDLATFETDLATTEVLVNQFRDRLHLDTTVLVSESGLFARSDLDRVQAAGAEAVLVGEALMRQEDVESALHALVGA</sequence>
<dbReference type="EC" id="4.1.1.48" evidence="1"/>
<dbReference type="EMBL" id="CP000097">
    <property type="protein sequence ID" value="ABB26487.1"/>
    <property type="molecule type" value="Genomic_DNA"/>
</dbReference>
<dbReference type="RefSeq" id="WP_011360305.1">
    <property type="nucleotide sequence ID" value="NC_007513.1"/>
</dbReference>
<dbReference type="SMR" id="Q3AV87"/>
<dbReference type="STRING" id="316279.Syncc9902_1529"/>
<dbReference type="KEGG" id="sye:Syncc9902_1529"/>
<dbReference type="eggNOG" id="COG0134">
    <property type="taxonomic scope" value="Bacteria"/>
</dbReference>
<dbReference type="HOGENOM" id="CLU_034247_1_0_3"/>
<dbReference type="OrthoDB" id="9804217at2"/>
<dbReference type="UniPathway" id="UPA00035">
    <property type="reaction ID" value="UER00043"/>
</dbReference>
<dbReference type="Proteomes" id="UP000002712">
    <property type="component" value="Chromosome"/>
</dbReference>
<dbReference type="GO" id="GO:0004425">
    <property type="term" value="F:indole-3-glycerol-phosphate synthase activity"/>
    <property type="evidence" value="ECO:0007669"/>
    <property type="project" value="UniProtKB-UniRule"/>
</dbReference>
<dbReference type="GO" id="GO:0004640">
    <property type="term" value="F:phosphoribosylanthranilate isomerase activity"/>
    <property type="evidence" value="ECO:0007669"/>
    <property type="project" value="TreeGrafter"/>
</dbReference>
<dbReference type="GO" id="GO:0000162">
    <property type="term" value="P:L-tryptophan biosynthetic process"/>
    <property type="evidence" value="ECO:0007669"/>
    <property type="project" value="UniProtKB-UniRule"/>
</dbReference>
<dbReference type="CDD" id="cd00331">
    <property type="entry name" value="IGPS"/>
    <property type="match status" value="1"/>
</dbReference>
<dbReference type="FunFam" id="3.20.20.70:FF:000024">
    <property type="entry name" value="Indole-3-glycerol phosphate synthase"/>
    <property type="match status" value="1"/>
</dbReference>
<dbReference type="Gene3D" id="3.20.20.70">
    <property type="entry name" value="Aldolase class I"/>
    <property type="match status" value="1"/>
</dbReference>
<dbReference type="HAMAP" id="MF_00134_B">
    <property type="entry name" value="IGPS_B"/>
    <property type="match status" value="1"/>
</dbReference>
<dbReference type="InterPro" id="IPR013785">
    <property type="entry name" value="Aldolase_TIM"/>
</dbReference>
<dbReference type="InterPro" id="IPR045186">
    <property type="entry name" value="Indole-3-glycerol_P_synth"/>
</dbReference>
<dbReference type="InterPro" id="IPR013798">
    <property type="entry name" value="Indole-3-glycerol_P_synth_dom"/>
</dbReference>
<dbReference type="InterPro" id="IPR001468">
    <property type="entry name" value="Indole-3-GlycerolPSynthase_CS"/>
</dbReference>
<dbReference type="InterPro" id="IPR011060">
    <property type="entry name" value="RibuloseP-bd_barrel"/>
</dbReference>
<dbReference type="NCBIfam" id="NF001372">
    <property type="entry name" value="PRK00278.1-4"/>
    <property type="match status" value="1"/>
</dbReference>
<dbReference type="NCBIfam" id="NF001377">
    <property type="entry name" value="PRK00278.2-4"/>
    <property type="match status" value="1"/>
</dbReference>
<dbReference type="PANTHER" id="PTHR22854:SF2">
    <property type="entry name" value="INDOLE-3-GLYCEROL-PHOSPHATE SYNTHASE"/>
    <property type="match status" value="1"/>
</dbReference>
<dbReference type="PANTHER" id="PTHR22854">
    <property type="entry name" value="TRYPTOPHAN BIOSYNTHESIS PROTEIN"/>
    <property type="match status" value="1"/>
</dbReference>
<dbReference type="Pfam" id="PF00218">
    <property type="entry name" value="IGPS"/>
    <property type="match status" value="1"/>
</dbReference>
<dbReference type="SUPFAM" id="SSF51366">
    <property type="entry name" value="Ribulose-phoshate binding barrel"/>
    <property type="match status" value="1"/>
</dbReference>
<dbReference type="PROSITE" id="PS00614">
    <property type="entry name" value="IGPS"/>
    <property type="match status" value="1"/>
</dbReference>
<feature type="chain" id="PRO_1000018562" description="Indole-3-glycerol phosphate synthase">
    <location>
        <begin position="1"/>
        <end position="294"/>
    </location>
</feature>
<evidence type="ECO:0000255" key="1">
    <source>
        <dbReference type="HAMAP-Rule" id="MF_00134"/>
    </source>
</evidence>
<keyword id="KW-0028">Amino-acid biosynthesis</keyword>
<keyword id="KW-0057">Aromatic amino acid biosynthesis</keyword>
<keyword id="KW-0210">Decarboxylase</keyword>
<keyword id="KW-0456">Lyase</keyword>
<keyword id="KW-1185">Reference proteome</keyword>
<keyword id="KW-0822">Tryptophan biosynthesis</keyword>
<protein>
    <recommendedName>
        <fullName evidence="1">Indole-3-glycerol phosphate synthase</fullName>
        <shortName evidence="1">IGPS</shortName>
        <ecNumber evidence="1">4.1.1.48</ecNumber>
    </recommendedName>
</protein>
<proteinExistence type="inferred from homology"/>
<reference key="1">
    <citation type="submission" date="2005-08" db="EMBL/GenBank/DDBJ databases">
        <title>Complete sequence of Synechococcus sp. CC9902.</title>
        <authorList>
            <person name="Copeland A."/>
            <person name="Lucas S."/>
            <person name="Lapidus A."/>
            <person name="Barry K."/>
            <person name="Detter J.C."/>
            <person name="Glavina T."/>
            <person name="Hammon N."/>
            <person name="Israni S."/>
            <person name="Pitluck S."/>
            <person name="Martinez M."/>
            <person name="Schmutz J."/>
            <person name="Larimer F."/>
            <person name="Land M."/>
            <person name="Kyrpides N."/>
            <person name="Ivanova N."/>
            <person name="Richardson P."/>
        </authorList>
    </citation>
    <scope>NUCLEOTIDE SEQUENCE [LARGE SCALE GENOMIC DNA]</scope>
    <source>
        <strain>CC9902</strain>
    </source>
</reference>
<gene>
    <name evidence="1" type="primary">trpC</name>
    <name type="ordered locus">Syncc9902_1529</name>
</gene>
<accession>Q3AV87</accession>